<name>P33MX_XENLA</name>
<evidence type="ECO:0000250" key="1"/>
<evidence type="ECO:0000256" key="2">
    <source>
        <dbReference type="SAM" id="MobiDB-lite"/>
    </source>
</evidence>
<evidence type="ECO:0000305" key="3"/>
<dbReference type="EC" id="1.-.-.-"/>
<dbReference type="EMBL" id="BC108536">
    <property type="protein sequence ID" value="AAI08537.1"/>
    <property type="molecule type" value="mRNA"/>
</dbReference>
<dbReference type="RefSeq" id="NP_001089847.1">
    <property type="nucleotide sequence ID" value="NM_001096378.1"/>
</dbReference>
<dbReference type="BioGRID" id="592694">
    <property type="interactions" value="1"/>
</dbReference>
<dbReference type="IntAct" id="Q32NP7">
    <property type="interactions" value="1"/>
</dbReference>
<dbReference type="DNASU" id="734913"/>
<dbReference type="GeneID" id="734913"/>
<dbReference type="KEGG" id="xla:734913"/>
<dbReference type="AGR" id="Xenbase:XB-GENE-991072"/>
<dbReference type="CTD" id="734913"/>
<dbReference type="Xenbase" id="XB-GENE-991072">
    <property type="gene designation" value="KIAA1191.L"/>
</dbReference>
<dbReference type="OrthoDB" id="8935954at2759"/>
<dbReference type="Proteomes" id="UP000186698">
    <property type="component" value="Chromosome 3L"/>
</dbReference>
<dbReference type="Bgee" id="734913">
    <property type="expression patterns" value="Expressed in brain and 19 other cell types or tissues"/>
</dbReference>
<dbReference type="GO" id="GO:0005737">
    <property type="term" value="C:cytoplasm"/>
    <property type="evidence" value="ECO:0000250"/>
    <property type="project" value="UniProtKB"/>
</dbReference>
<dbReference type="GO" id="GO:0016491">
    <property type="term" value="F:oxidoreductase activity"/>
    <property type="evidence" value="ECO:0007669"/>
    <property type="project" value="UniProtKB-KW"/>
</dbReference>
<dbReference type="InterPro" id="IPR026759">
    <property type="entry name" value="P33MONOX"/>
</dbReference>
<dbReference type="PANTHER" id="PTHR28342">
    <property type="entry name" value="MONOOXYGENASE P33MONOX-RELATED"/>
    <property type="match status" value="1"/>
</dbReference>
<dbReference type="PANTHER" id="PTHR28342:SF1">
    <property type="entry name" value="MONOOXYGENASE P33MONOX-RELATED"/>
    <property type="match status" value="1"/>
</dbReference>
<dbReference type="Pfam" id="PF15302">
    <property type="entry name" value="P33MONOX"/>
    <property type="match status" value="1"/>
</dbReference>
<keyword id="KW-0963">Cytoplasm</keyword>
<keyword id="KW-0521">NADP</keyword>
<keyword id="KW-0560">Oxidoreductase</keyword>
<keyword id="KW-1185">Reference proteome</keyword>
<gene>
    <name type="primary">p33monox</name>
</gene>
<feature type="chain" id="PRO_0000307736" description="Putative monooxygenase p33MONOX">
    <location>
        <begin position="1"/>
        <end position="300"/>
    </location>
</feature>
<feature type="region of interest" description="Disordered" evidence="2">
    <location>
        <begin position="1"/>
        <end position="20"/>
    </location>
</feature>
<feature type="region of interest" description="Disordered" evidence="2">
    <location>
        <begin position="75"/>
        <end position="95"/>
    </location>
</feature>
<feature type="region of interest" description="Disordered" evidence="2">
    <location>
        <begin position="121"/>
        <end position="142"/>
    </location>
</feature>
<feature type="region of interest" description="Disordered" evidence="2">
    <location>
        <begin position="162"/>
        <end position="245"/>
    </location>
</feature>
<feature type="region of interest" description="Disordered" evidence="2">
    <location>
        <begin position="258"/>
        <end position="300"/>
    </location>
</feature>
<feature type="compositionally biased region" description="Low complexity" evidence="2">
    <location>
        <begin position="169"/>
        <end position="185"/>
    </location>
</feature>
<feature type="compositionally biased region" description="Polar residues" evidence="2">
    <location>
        <begin position="191"/>
        <end position="209"/>
    </location>
</feature>
<proteinExistence type="evidence at transcript level"/>
<comment type="function">
    <text evidence="1">Potential NADPH-dependent oxidoreductase.</text>
</comment>
<comment type="subcellular location">
    <subcellularLocation>
        <location evidence="1">Cytoplasm</location>
    </subcellularLocation>
</comment>
<comment type="similarity">
    <text evidence="3">Belongs to the P33MONOX family.</text>
</comment>
<accession>Q32NP7</accession>
<protein>
    <recommendedName>
        <fullName>Putative monooxygenase p33MONOX</fullName>
        <ecNumber>1.-.-.-</ecNumber>
    </recommendedName>
</protein>
<reference key="1">
    <citation type="submission" date="2005-11" db="EMBL/GenBank/DDBJ databases">
        <authorList>
            <consortium name="NIH - Xenopus Gene Collection (XGC) project"/>
        </authorList>
    </citation>
    <scope>NUCLEOTIDE SEQUENCE [LARGE SCALE MRNA]</scope>
    <source>
        <tissue>Embryo</tissue>
    </source>
</reference>
<organism>
    <name type="scientific">Xenopus laevis</name>
    <name type="common">African clawed frog</name>
    <dbReference type="NCBI Taxonomy" id="8355"/>
    <lineage>
        <taxon>Eukaryota</taxon>
        <taxon>Metazoa</taxon>
        <taxon>Chordata</taxon>
        <taxon>Craniata</taxon>
        <taxon>Vertebrata</taxon>
        <taxon>Euteleostomi</taxon>
        <taxon>Amphibia</taxon>
        <taxon>Batrachia</taxon>
        <taxon>Anura</taxon>
        <taxon>Pipoidea</taxon>
        <taxon>Pipidae</taxon>
        <taxon>Xenopodinae</taxon>
        <taxon>Xenopus</taxon>
        <taxon>Xenopus</taxon>
    </lineage>
</organism>
<sequence>MASRQPDVPAIEHGSSGLLGKMSLPVGMHRRAFSYDDALDDTAPMTPPPSDMCSNTMWRKPIIPERKYQLLSKIEDGDSNIPPPSLPPSSSTEKVPVVKAKATSIIMNSLMTKHTQESIQRFEQQAGLRDAGYTPHKGLTSEETKYHRVAEALHKLNMHIGESTEEKQSSSAQSTPCSTPSSSPKQMRRSWFSQGSTSSLPAGDLSNSDGGVDKWSMFGPRAVQKSTTDPGGFTVQPYKGAQKPTPMELMRAQASRISDDPAALKPPKMEMPSLVSGTKNIPRGHNLKPRDMNILTPTGF</sequence>